<dbReference type="EC" id="5.3.1.6" evidence="1"/>
<dbReference type="EMBL" id="CP000733">
    <property type="protein sequence ID" value="ABS78025.1"/>
    <property type="molecule type" value="Genomic_DNA"/>
</dbReference>
<dbReference type="RefSeq" id="WP_005770348.1">
    <property type="nucleotide sequence ID" value="NC_009727.1"/>
</dbReference>
<dbReference type="SMR" id="A9KBD3"/>
<dbReference type="KEGG" id="cbd:CBUD_0147"/>
<dbReference type="HOGENOM" id="CLU_056590_1_1_6"/>
<dbReference type="UniPathway" id="UPA00115">
    <property type="reaction ID" value="UER00412"/>
</dbReference>
<dbReference type="Proteomes" id="UP000008555">
    <property type="component" value="Chromosome"/>
</dbReference>
<dbReference type="GO" id="GO:0005829">
    <property type="term" value="C:cytosol"/>
    <property type="evidence" value="ECO:0007669"/>
    <property type="project" value="TreeGrafter"/>
</dbReference>
<dbReference type="GO" id="GO:0004751">
    <property type="term" value="F:ribose-5-phosphate isomerase activity"/>
    <property type="evidence" value="ECO:0007669"/>
    <property type="project" value="UniProtKB-UniRule"/>
</dbReference>
<dbReference type="GO" id="GO:0006014">
    <property type="term" value="P:D-ribose metabolic process"/>
    <property type="evidence" value="ECO:0007669"/>
    <property type="project" value="TreeGrafter"/>
</dbReference>
<dbReference type="GO" id="GO:0009052">
    <property type="term" value="P:pentose-phosphate shunt, non-oxidative branch"/>
    <property type="evidence" value="ECO:0007669"/>
    <property type="project" value="UniProtKB-UniRule"/>
</dbReference>
<dbReference type="CDD" id="cd01398">
    <property type="entry name" value="RPI_A"/>
    <property type="match status" value="1"/>
</dbReference>
<dbReference type="FunFam" id="3.30.70.260:FF:000004">
    <property type="entry name" value="Ribose-5-phosphate isomerase A"/>
    <property type="match status" value="1"/>
</dbReference>
<dbReference type="FunFam" id="3.40.50.1360:FF:000001">
    <property type="entry name" value="Ribose-5-phosphate isomerase A"/>
    <property type="match status" value="1"/>
</dbReference>
<dbReference type="Gene3D" id="3.30.70.260">
    <property type="match status" value="1"/>
</dbReference>
<dbReference type="Gene3D" id="3.40.50.1360">
    <property type="match status" value="1"/>
</dbReference>
<dbReference type="HAMAP" id="MF_00170">
    <property type="entry name" value="Rib_5P_isom_A"/>
    <property type="match status" value="1"/>
</dbReference>
<dbReference type="InterPro" id="IPR037171">
    <property type="entry name" value="NagB/RpiA_transferase-like"/>
</dbReference>
<dbReference type="InterPro" id="IPR020672">
    <property type="entry name" value="Ribose5P_isomerase_typA_subgr"/>
</dbReference>
<dbReference type="InterPro" id="IPR004788">
    <property type="entry name" value="Ribose5P_isomerase_type_A"/>
</dbReference>
<dbReference type="NCBIfam" id="NF001924">
    <property type="entry name" value="PRK00702.1"/>
    <property type="match status" value="1"/>
</dbReference>
<dbReference type="NCBIfam" id="TIGR00021">
    <property type="entry name" value="rpiA"/>
    <property type="match status" value="1"/>
</dbReference>
<dbReference type="PANTHER" id="PTHR11934">
    <property type="entry name" value="RIBOSE-5-PHOSPHATE ISOMERASE"/>
    <property type="match status" value="1"/>
</dbReference>
<dbReference type="PANTHER" id="PTHR11934:SF0">
    <property type="entry name" value="RIBOSE-5-PHOSPHATE ISOMERASE"/>
    <property type="match status" value="1"/>
</dbReference>
<dbReference type="Pfam" id="PF06026">
    <property type="entry name" value="Rib_5-P_isom_A"/>
    <property type="match status" value="1"/>
</dbReference>
<dbReference type="SUPFAM" id="SSF75445">
    <property type="entry name" value="D-ribose-5-phosphate isomerase (RpiA), lid domain"/>
    <property type="match status" value="1"/>
</dbReference>
<dbReference type="SUPFAM" id="SSF100950">
    <property type="entry name" value="NagB/RpiA/CoA transferase-like"/>
    <property type="match status" value="1"/>
</dbReference>
<comment type="function">
    <text evidence="1">Catalyzes the reversible conversion of ribose-5-phosphate to ribulose 5-phosphate.</text>
</comment>
<comment type="catalytic activity">
    <reaction evidence="1">
        <text>aldehydo-D-ribose 5-phosphate = D-ribulose 5-phosphate</text>
        <dbReference type="Rhea" id="RHEA:14657"/>
        <dbReference type="ChEBI" id="CHEBI:58121"/>
        <dbReference type="ChEBI" id="CHEBI:58273"/>
        <dbReference type="EC" id="5.3.1.6"/>
    </reaction>
</comment>
<comment type="pathway">
    <text evidence="1">Carbohydrate degradation; pentose phosphate pathway; D-ribose 5-phosphate from D-ribulose 5-phosphate (non-oxidative stage): step 1/1.</text>
</comment>
<comment type="subunit">
    <text evidence="1">Homodimer.</text>
</comment>
<comment type="similarity">
    <text evidence="1">Belongs to the ribose 5-phosphate isomerase family.</text>
</comment>
<evidence type="ECO:0000255" key="1">
    <source>
        <dbReference type="HAMAP-Rule" id="MF_00170"/>
    </source>
</evidence>
<protein>
    <recommendedName>
        <fullName evidence="1">Ribose-5-phosphate isomerase A</fullName>
        <ecNumber evidence="1">5.3.1.6</ecNumber>
    </recommendedName>
    <alternativeName>
        <fullName evidence="1">Phosphoriboisomerase A</fullName>
        <shortName evidence="1">PRI</shortName>
    </alternativeName>
</protein>
<name>RPIA_COXBN</name>
<reference key="1">
    <citation type="journal article" date="2009" name="Infect. Immun.">
        <title>Comparative genomics reveal extensive transposon-mediated genomic plasticity and diversity among potential effector proteins within the genus Coxiella.</title>
        <authorList>
            <person name="Beare P.A."/>
            <person name="Unsworth N."/>
            <person name="Andoh M."/>
            <person name="Voth D.E."/>
            <person name="Omsland A."/>
            <person name="Gilk S.D."/>
            <person name="Williams K.P."/>
            <person name="Sobral B.W."/>
            <person name="Kupko J.J. III"/>
            <person name="Porcella S.F."/>
            <person name="Samuel J.E."/>
            <person name="Heinzen R.A."/>
        </authorList>
    </citation>
    <scope>NUCLEOTIDE SEQUENCE [LARGE SCALE GENOMIC DNA]</scope>
    <source>
        <strain>Dugway 5J108-111</strain>
    </source>
</reference>
<keyword id="KW-0413">Isomerase</keyword>
<proteinExistence type="inferred from homology"/>
<organism>
    <name type="scientific">Coxiella burnetii (strain Dugway 5J108-111)</name>
    <dbReference type="NCBI Taxonomy" id="434922"/>
    <lineage>
        <taxon>Bacteria</taxon>
        <taxon>Pseudomonadati</taxon>
        <taxon>Pseudomonadota</taxon>
        <taxon>Gammaproteobacteria</taxon>
        <taxon>Legionellales</taxon>
        <taxon>Coxiellaceae</taxon>
        <taxon>Coxiella</taxon>
    </lineage>
</organism>
<gene>
    <name evidence="1" type="primary">rpiA</name>
    <name type="ordered locus">CBUD_0147</name>
</gene>
<accession>A9KBD3</accession>
<feature type="chain" id="PRO_1000077062" description="Ribose-5-phosphate isomerase A">
    <location>
        <begin position="1"/>
        <end position="220"/>
    </location>
</feature>
<feature type="active site" description="Proton acceptor" evidence="1">
    <location>
        <position position="103"/>
    </location>
</feature>
<feature type="binding site" evidence="1">
    <location>
        <begin position="28"/>
        <end position="31"/>
    </location>
    <ligand>
        <name>substrate</name>
    </ligand>
</feature>
<feature type="binding site" evidence="1">
    <location>
        <begin position="81"/>
        <end position="84"/>
    </location>
    <ligand>
        <name>substrate</name>
    </ligand>
</feature>
<feature type="binding site" evidence="1">
    <location>
        <begin position="94"/>
        <end position="97"/>
    </location>
    <ligand>
        <name>substrate</name>
    </ligand>
</feature>
<feature type="binding site" evidence="1">
    <location>
        <position position="121"/>
    </location>
    <ligand>
        <name>substrate</name>
    </ligand>
</feature>
<sequence>MSKNELKKAAAMEAIQFVKNVNIVGVGTGSTVNYFIDALAEIKHQIEGAVASSVATENRLKEHRIPVVDLNSVSNVDVYVDGADEFNKHFYLTKGGGGALTREKIIAAAAKRFICIVDESKQVDVLGQFPLPIEVIPMARSFVAREIVKLKGDPVYRQGFTTDNGNVILDIHNLTILNPVELEAILNNIPGVIANGLFAQQPADDLLIGTPAGVQLHHRK</sequence>